<organism>
    <name type="scientific">Aster yellows witches'-broom phytoplasma (strain AYWB)</name>
    <dbReference type="NCBI Taxonomy" id="322098"/>
    <lineage>
        <taxon>Bacteria</taxon>
        <taxon>Bacillati</taxon>
        <taxon>Mycoplasmatota</taxon>
        <taxon>Mollicutes</taxon>
        <taxon>Acholeplasmatales</taxon>
        <taxon>Acholeplasmataceae</taxon>
        <taxon>Candidatus Phytoplasma</taxon>
        <taxon>16SrI (Aster yellows group)</taxon>
    </lineage>
</organism>
<name>RL32_AYWBP</name>
<reference key="1">
    <citation type="journal article" date="2006" name="J. Bacteriol.">
        <title>Living with genome instability: the adaptation of phytoplasmas to diverse environments of their insect and plant hosts.</title>
        <authorList>
            <person name="Bai X."/>
            <person name="Zhang J."/>
            <person name="Ewing A."/>
            <person name="Miller S.A."/>
            <person name="Jancso Radek A."/>
            <person name="Shevchenko D.V."/>
            <person name="Tsukerman K."/>
            <person name="Walunas T."/>
            <person name="Lapidus A."/>
            <person name="Campbell J.W."/>
            <person name="Hogenhout S.A."/>
        </authorList>
    </citation>
    <scope>NUCLEOTIDE SEQUENCE [LARGE SCALE GENOMIC DNA]</scope>
    <source>
        <strain>AYWB</strain>
    </source>
</reference>
<dbReference type="EMBL" id="CP000061">
    <property type="protein sequence ID" value="ABC65642.1"/>
    <property type="molecule type" value="Genomic_DNA"/>
</dbReference>
<dbReference type="RefSeq" id="WP_011412804.1">
    <property type="nucleotide sequence ID" value="NC_007716.1"/>
</dbReference>
<dbReference type="SMR" id="Q2NIV1"/>
<dbReference type="STRING" id="322098.AYWB_525"/>
<dbReference type="KEGG" id="ayw:AYWB_525"/>
<dbReference type="eggNOG" id="COG0333">
    <property type="taxonomic scope" value="Bacteria"/>
</dbReference>
<dbReference type="HOGENOM" id="CLU_129084_2_3_14"/>
<dbReference type="OrthoDB" id="9812874at2"/>
<dbReference type="PhylomeDB" id="Q2NIV1"/>
<dbReference type="Proteomes" id="UP000001934">
    <property type="component" value="Chromosome"/>
</dbReference>
<dbReference type="GO" id="GO:0015934">
    <property type="term" value="C:large ribosomal subunit"/>
    <property type="evidence" value="ECO:0007669"/>
    <property type="project" value="InterPro"/>
</dbReference>
<dbReference type="GO" id="GO:0003735">
    <property type="term" value="F:structural constituent of ribosome"/>
    <property type="evidence" value="ECO:0007669"/>
    <property type="project" value="InterPro"/>
</dbReference>
<dbReference type="GO" id="GO:0006412">
    <property type="term" value="P:translation"/>
    <property type="evidence" value="ECO:0007669"/>
    <property type="project" value="UniProtKB-UniRule"/>
</dbReference>
<dbReference type="HAMAP" id="MF_00340">
    <property type="entry name" value="Ribosomal_bL32"/>
    <property type="match status" value="1"/>
</dbReference>
<dbReference type="InterPro" id="IPR002677">
    <property type="entry name" value="Ribosomal_bL32"/>
</dbReference>
<dbReference type="InterPro" id="IPR044957">
    <property type="entry name" value="Ribosomal_bL32_bact"/>
</dbReference>
<dbReference type="InterPro" id="IPR011332">
    <property type="entry name" value="Ribosomal_zn-bd"/>
</dbReference>
<dbReference type="NCBIfam" id="TIGR01031">
    <property type="entry name" value="rpmF_bact"/>
    <property type="match status" value="1"/>
</dbReference>
<dbReference type="PANTHER" id="PTHR35534">
    <property type="entry name" value="50S RIBOSOMAL PROTEIN L32"/>
    <property type="match status" value="1"/>
</dbReference>
<dbReference type="PANTHER" id="PTHR35534:SF1">
    <property type="entry name" value="LARGE RIBOSOMAL SUBUNIT PROTEIN BL32"/>
    <property type="match status" value="1"/>
</dbReference>
<dbReference type="Pfam" id="PF01783">
    <property type="entry name" value="Ribosomal_L32p"/>
    <property type="match status" value="1"/>
</dbReference>
<dbReference type="SUPFAM" id="SSF57829">
    <property type="entry name" value="Zn-binding ribosomal proteins"/>
    <property type="match status" value="1"/>
</dbReference>
<sequence length="68" mass="7794">MAVPFRRTGKTAKRKRRTHYKLSNPALVLCKETNAFTLSHRVTKNSGYYKGKLILENKPSKAQKTTDN</sequence>
<feature type="chain" id="PRO_0000296423" description="Large ribosomal subunit protein bL32">
    <location>
        <begin position="1"/>
        <end position="68"/>
    </location>
</feature>
<proteinExistence type="inferred from homology"/>
<comment type="similarity">
    <text evidence="1">Belongs to the bacterial ribosomal protein bL32 family.</text>
</comment>
<accession>Q2NIV1</accession>
<protein>
    <recommendedName>
        <fullName evidence="1">Large ribosomal subunit protein bL32</fullName>
    </recommendedName>
    <alternativeName>
        <fullName evidence="2">50S ribosomal protein L32</fullName>
    </alternativeName>
</protein>
<gene>
    <name evidence="1" type="primary">rpmF</name>
    <name type="ordered locus">AYWB_525</name>
</gene>
<keyword id="KW-0687">Ribonucleoprotein</keyword>
<keyword id="KW-0689">Ribosomal protein</keyword>
<evidence type="ECO:0000255" key="1">
    <source>
        <dbReference type="HAMAP-Rule" id="MF_00340"/>
    </source>
</evidence>
<evidence type="ECO:0000305" key="2"/>